<reference key="1">
    <citation type="journal article" date="2011" name="J. Bacteriol.">
        <title>Genome sequence of lineage III Listeria monocytogenes strain HCC23.</title>
        <authorList>
            <person name="Steele C.L."/>
            <person name="Donaldson J.R."/>
            <person name="Paul D."/>
            <person name="Banes M.M."/>
            <person name="Arick T."/>
            <person name="Bridges S.M."/>
            <person name="Lawrence M.L."/>
        </authorList>
    </citation>
    <scope>NUCLEOTIDE SEQUENCE [LARGE SCALE GENOMIC DNA]</scope>
    <source>
        <strain>HCC23</strain>
    </source>
</reference>
<protein>
    <recommendedName>
        <fullName evidence="1">Large ribosomal subunit protein uL15</fullName>
    </recommendedName>
    <alternativeName>
        <fullName evidence="3">50S ribosomal protein L15</fullName>
    </alternativeName>
</protein>
<evidence type="ECO:0000255" key="1">
    <source>
        <dbReference type="HAMAP-Rule" id="MF_01341"/>
    </source>
</evidence>
<evidence type="ECO:0000256" key="2">
    <source>
        <dbReference type="SAM" id="MobiDB-lite"/>
    </source>
</evidence>
<evidence type="ECO:0000305" key="3"/>
<name>RL15_LISMH</name>
<sequence>MKLHELKPSEGSRKERNRVGRGTGSGNGKTSGRGHKGQKARSGGGVRLGFEGGQLPLFRRIPKRGFTNINRKEFAIVNLDVLNRFEDGTEVTPELLVETGIIRNEKSGIKILSNGNIEKKLTVKANKFSAAAKEAIEAAGGKTEVI</sequence>
<organism>
    <name type="scientific">Listeria monocytogenes serotype 4a (strain HCC23)</name>
    <dbReference type="NCBI Taxonomy" id="552536"/>
    <lineage>
        <taxon>Bacteria</taxon>
        <taxon>Bacillati</taxon>
        <taxon>Bacillota</taxon>
        <taxon>Bacilli</taxon>
        <taxon>Bacillales</taxon>
        <taxon>Listeriaceae</taxon>
        <taxon>Listeria</taxon>
    </lineage>
</organism>
<proteinExistence type="inferred from homology"/>
<gene>
    <name evidence="1" type="primary">rplO</name>
    <name type="ordered locus">LMHCC_2921</name>
</gene>
<dbReference type="EMBL" id="CP001175">
    <property type="protein sequence ID" value="ACK41252.1"/>
    <property type="molecule type" value="Genomic_DNA"/>
</dbReference>
<dbReference type="RefSeq" id="WP_003723680.1">
    <property type="nucleotide sequence ID" value="NC_011660.1"/>
</dbReference>
<dbReference type="SMR" id="B8DB27"/>
<dbReference type="GeneID" id="93240494"/>
<dbReference type="KEGG" id="lmh:LMHCC_2921"/>
<dbReference type="HOGENOM" id="CLU_055188_4_2_9"/>
<dbReference type="GO" id="GO:0022625">
    <property type="term" value="C:cytosolic large ribosomal subunit"/>
    <property type="evidence" value="ECO:0007669"/>
    <property type="project" value="TreeGrafter"/>
</dbReference>
<dbReference type="GO" id="GO:0019843">
    <property type="term" value="F:rRNA binding"/>
    <property type="evidence" value="ECO:0007669"/>
    <property type="project" value="UniProtKB-UniRule"/>
</dbReference>
<dbReference type="GO" id="GO:0003735">
    <property type="term" value="F:structural constituent of ribosome"/>
    <property type="evidence" value="ECO:0007669"/>
    <property type="project" value="InterPro"/>
</dbReference>
<dbReference type="GO" id="GO:0006412">
    <property type="term" value="P:translation"/>
    <property type="evidence" value="ECO:0007669"/>
    <property type="project" value="UniProtKB-UniRule"/>
</dbReference>
<dbReference type="FunFam" id="3.100.10.10:FF:000004">
    <property type="entry name" value="50S ribosomal protein L15"/>
    <property type="match status" value="1"/>
</dbReference>
<dbReference type="Gene3D" id="3.100.10.10">
    <property type="match status" value="1"/>
</dbReference>
<dbReference type="HAMAP" id="MF_01341">
    <property type="entry name" value="Ribosomal_uL15"/>
    <property type="match status" value="1"/>
</dbReference>
<dbReference type="InterPro" id="IPR030878">
    <property type="entry name" value="Ribosomal_uL15"/>
</dbReference>
<dbReference type="InterPro" id="IPR021131">
    <property type="entry name" value="Ribosomal_uL15/eL18"/>
</dbReference>
<dbReference type="InterPro" id="IPR036227">
    <property type="entry name" value="Ribosomal_uL15/eL18_sf"/>
</dbReference>
<dbReference type="InterPro" id="IPR005749">
    <property type="entry name" value="Ribosomal_uL15_bac-type"/>
</dbReference>
<dbReference type="InterPro" id="IPR001196">
    <property type="entry name" value="Ribosomal_uL15_CS"/>
</dbReference>
<dbReference type="NCBIfam" id="TIGR01071">
    <property type="entry name" value="rplO_bact"/>
    <property type="match status" value="1"/>
</dbReference>
<dbReference type="PANTHER" id="PTHR12934">
    <property type="entry name" value="50S RIBOSOMAL PROTEIN L15"/>
    <property type="match status" value="1"/>
</dbReference>
<dbReference type="PANTHER" id="PTHR12934:SF11">
    <property type="entry name" value="LARGE RIBOSOMAL SUBUNIT PROTEIN UL15M"/>
    <property type="match status" value="1"/>
</dbReference>
<dbReference type="Pfam" id="PF00828">
    <property type="entry name" value="Ribosomal_L27A"/>
    <property type="match status" value="1"/>
</dbReference>
<dbReference type="SUPFAM" id="SSF52080">
    <property type="entry name" value="Ribosomal proteins L15p and L18e"/>
    <property type="match status" value="1"/>
</dbReference>
<dbReference type="PROSITE" id="PS00475">
    <property type="entry name" value="RIBOSOMAL_L15"/>
    <property type="match status" value="1"/>
</dbReference>
<comment type="function">
    <text evidence="1">Binds to the 23S rRNA.</text>
</comment>
<comment type="subunit">
    <text evidence="1">Part of the 50S ribosomal subunit.</text>
</comment>
<comment type="similarity">
    <text evidence="1">Belongs to the universal ribosomal protein uL15 family.</text>
</comment>
<keyword id="KW-0687">Ribonucleoprotein</keyword>
<keyword id="KW-0689">Ribosomal protein</keyword>
<keyword id="KW-0694">RNA-binding</keyword>
<keyword id="KW-0699">rRNA-binding</keyword>
<accession>B8DB27</accession>
<feature type="chain" id="PRO_1000166302" description="Large ribosomal subunit protein uL15">
    <location>
        <begin position="1"/>
        <end position="146"/>
    </location>
</feature>
<feature type="region of interest" description="Disordered" evidence="2">
    <location>
        <begin position="1"/>
        <end position="50"/>
    </location>
</feature>
<feature type="compositionally biased region" description="Basic and acidic residues" evidence="2">
    <location>
        <begin position="1"/>
        <end position="18"/>
    </location>
</feature>
<feature type="compositionally biased region" description="Gly residues" evidence="2">
    <location>
        <begin position="21"/>
        <end position="31"/>
    </location>
</feature>